<name>RS10_BOVIN</name>
<comment type="function">
    <text evidence="1">Component of the 40S ribosomal subunit. The ribosome is a large ribonucleoprotein complex responsible for the synthesis of proteins in the cell.</text>
</comment>
<comment type="subunit">
    <text evidence="1">Component of the small ribosomal subunit. The methylated form interacts with NPM1.</text>
</comment>
<comment type="subcellular location">
    <subcellularLocation>
        <location evidence="1">Cytoplasm</location>
    </subcellularLocation>
    <subcellularLocation>
        <location evidence="1">Nucleus</location>
        <location evidence="1">Nucleolus</location>
    </subcellularLocation>
    <text evidence="1">Localized in the granular component (GC) region of the nucleolus. Methylation is required for its localization in the GC region. Colocalizes with NPS1 in the GC region of the nucleolus.</text>
</comment>
<comment type="PTM">
    <text evidence="1">Methylated by PRMT5. Methylation is necessary for its interaction with NPS1, its localization in the granular component (GC) region of the nucleolus, for the proper assembly of ribosomes, protein synthesis and optimal cell proliferation.</text>
</comment>
<comment type="PTM">
    <text evidence="1">Monoubiquitinated by ZNF598 when a ribosome has stalled during translation of poly(A) sequences, leading to preclude synthesis of a long poly-lysine tail and initiate the ribosome quality control (RQC) pathway to degrade the potentially detrimental aberrant nascent polypeptide. Deubiquitinated by OTUD3 and USP21, antagonizing ZNF598 activity. Deubiquitinated by OTUD1, antagonizing ZNF598 activity and stimulating formation of polysomes: deubiquitination by OTUD1 promotes stability and translation of a subset mRNAs with a high abundance of rare codons can limit the translation rate. Deubiquitinated by USP10.</text>
</comment>
<comment type="similarity">
    <text evidence="4">Belongs to the eukaryotic ribosomal protein eS10 family.</text>
</comment>
<dbReference type="EMBL" id="BC102416">
    <property type="protein sequence ID" value="AAI02417.1"/>
    <property type="molecule type" value="mRNA"/>
</dbReference>
<dbReference type="RefSeq" id="NP_001029888.1">
    <property type="nucleotide sequence ID" value="NM_001034716.2"/>
</dbReference>
<dbReference type="SMR" id="Q3T0F4"/>
<dbReference type="FunCoup" id="Q3T0F4">
    <property type="interactions" value="2709"/>
</dbReference>
<dbReference type="IntAct" id="Q3T0F4">
    <property type="interactions" value="1"/>
</dbReference>
<dbReference type="STRING" id="9913.ENSBTAP00000020719"/>
<dbReference type="PaxDb" id="9913-ENSBTAP00000056371"/>
<dbReference type="PeptideAtlas" id="Q3T0F4"/>
<dbReference type="Ensembl" id="ENSBTAT00000020719.7">
    <property type="protein sequence ID" value="ENSBTAP00000020719.5"/>
    <property type="gene ID" value="ENSBTAG00000015598.7"/>
</dbReference>
<dbReference type="GeneID" id="540965"/>
<dbReference type="KEGG" id="bta:540965"/>
<dbReference type="CTD" id="6204"/>
<dbReference type="VEuPathDB" id="HostDB:ENSBTAG00000015598"/>
<dbReference type="VGNC" id="VGNC:55922">
    <property type="gene designation" value="RPS10"/>
</dbReference>
<dbReference type="eggNOG" id="KOG3344">
    <property type="taxonomic scope" value="Eukaryota"/>
</dbReference>
<dbReference type="GeneTree" id="ENSGT00440000034918"/>
<dbReference type="HOGENOM" id="CLU_089349_3_1_1"/>
<dbReference type="InParanoid" id="Q3T0F4"/>
<dbReference type="OMA" id="YRRRDQE"/>
<dbReference type="OrthoDB" id="5211809at2759"/>
<dbReference type="Reactome" id="R-BTA-156827">
    <property type="pathway name" value="L13a-mediated translational silencing of Ceruloplasmin expression"/>
</dbReference>
<dbReference type="Reactome" id="R-BTA-1799339">
    <property type="pathway name" value="SRP-dependent cotranslational protein targeting to membrane"/>
</dbReference>
<dbReference type="Reactome" id="R-BTA-6791226">
    <property type="pathway name" value="Major pathway of rRNA processing in the nucleolus and cytosol"/>
</dbReference>
<dbReference type="Reactome" id="R-BTA-72649">
    <property type="pathway name" value="Translation initiation complex formation"/>
</dbReference>
<dbReference type="Reactome" id="R-BTA-72689">
    <property type="pathway name" value="Formation of a pool of free 40S subunits"/>
</dbReference>
<dbReference type="Reactome" id="R-BTA-72695">
    <property type="pathway name" value="Formation of the ternary complex, and subsequently, the 43S complex"/>
</dbReference>
<dbReference type="Reactome" id="R-BTA-72702">
    <property type="pathway name" value="Ribosomal scanning and start codon recognition"/>
</dbReference>
<dbReference type="Reactome" id="R-BTA-72706">
    <property type="pathway name" value="GTP hydrolysis and joining of the 60S ribosomal subunit"/>
</dbReference>
<dbReference type="Reactome" id="R-BTA-975956">
    <property type="pathway name" value="Nonsense Mediated Decay (NMD) independent of the Exon Junction Complex (EJC)"/>
</dbReference>
<dbReference type="Reactome" id="R-BTA-975957">
    <property type="pathway name" value="Nonsense Mediated Decay (NMD) enhanced by the Exon Junction Complex (EJC)"/>
</dbReference>
<dbReference type="Proteomes" id="UP000009136">
    <property type="component" value="Chromosome 23"/>
</dbReference>
<dbReference type="Bgee" id="ENSBTAG00000015598">
    <property type="expression patterns" value="Expressed in blood and 108 other cell types or tissues"/>
</dbReference>
<dbReference type="GO" id="GO:0022627">
    <property type="term" value="C:cytosolic small ribosomal subunit"/>
    <property type="evidence" value="ECO:0000318"/>
    <property type="project" value="GO_Central"/>
</dbReference>
<dbReference type="GO" id="GO:0005730">
    <property type="term" value="C:nucleolus"/>
    <property type="evidence" value="ECO:0000250"/>
    <property type="project" value="UniProtKB"/>
</dbReference>
<dbReference type="GO" id="GO:0003723">
    <property type="term" value="F:RNA binding"/>
    <property type="evidence" value="ECO:0000318"/>
    <property type="project" value="GO_Central"/>
</dbReference>
<dbReference type="GO" id="GO:0003735">
    <property type="term" value="F:structural constituent of ribosome"/>
    <property type="evidence" value="ECO:0000318"/>
    <property type="project" value="GO_Central"/>
</dbReference>
<dbReference type="FunFam" id="1.10.10.10:FF:001335">
    <property type="entry name" value="40S ribosomal protein S10"/>
    <property type="match status" value="1"/>
</dbReference>
<dbReference type="Gene3D" id="1.10.10.10">
    <property type="entry name" value="Winged helix-like DNA-binding domain superfamily/Winged helix DNA-binding domain"/>
    <property type="match status" value="1"/>
</dbReference>
<dbReference type="InterPro" id="IPR005326">
    <property type="entry name" value="Plectin_eS10_N"/>
</dbReference>
<dbReference type="InterPro" id="IPR037447">
    <property type="entry name" value="Ribosomal_eS10"/>
</dbReference>
<dbReference type="InterPro" id="IPR036388">
    <property type="entry name" value="WH-like_DNA-bd_sf"/>
</dbReference>
<dbReference type="PANTHER" id="PTHR12146">
    <property type="entry name" value="40S RIBOSOMAL PROTEIN S10"/>
    <property type="match status" value="1"/>
</dbReference>
<dbReference type="PANTHER" id="PTHR12146:SF10">
    <property type="entry name" value="SMALL RIBOSOMAL SUBUNIT PROTEIN ES10"/>
    <property type="match status" value="1"/>
</dbReference>
<dbReference type="Pfam" id="PF03501">
    <property type="entry name" value="S10_plectin"/>
    <property type="match status" value="1"/>
</dbReference>
<keyword id="KW-0963">Cytoplasm</keyword>
<keyword id="KW-1017">Isopeptide bond</keyword>
<keyword id="KW-0488">Methylation</keyword>
<keyword id="KW-0539">Nucleus</keyword>
<keyword id="KW-0597">Phosphoprotein</keyword>
<keyword id="KW-1185">Reference proteome</keyword>
<keyword id="KW-0687">Ribonucleoprotein</keyword>
<keyword id="KW-0689">Ribosomal protein</keyword>
<keyword id="KW-0832">Ubl conjugation</keyword>
<evidence type="ECO:0000250" key="1">
    <source>
        <dbReference type="UniProtKB" id="P46783"/>
    </source>
</evidence>
<evidence type="ECO:0000250" key="2">
    <source>
        <dbReference type="UniProtKB" id="P63325"/>
    </source>
</evidence>
<evidence type="ECO:0000256" key="3">
    <source>
        <dbReference type="SAM" id="MobiDB-lite"/>
    </source>
</evidence>
<evidence type="ECO:0000305" key="4"/>
<reference key="1">
    <citation type="submission" date="2005-08" db="EMBL/GenBank/DDBJ databases">
        <authorList>
            <consortium name="NIH - Mammalian Gene Collection (MGC) project"/>
        </authorList>
    </citation>
    <scope>NUCLEOTIDE SEQUENCE [LARGE SCALE MRNA]</scope>
    <source>
        <strain>Crossbred X Angus</strain>
        <tissue>Ileum</tissue>
    </source>
</reference>
<organism>
    <name type="scientific">Bos taurus</name>
    <name type="common">Bovine</name>
    <dbReference type="NCBI Taxonomy" id="9913"/>
    <lineage>
        <taxon>Eukaryota</taxon>
        <taxon>Metazoa</taxon>
        <taxon>Chordata</taxon>
        <taxon>Craniata</taxon>
        <taxon>Vertebrata</taxon>
        <taxon>Euteleostomi</taxon>
        <taxon>Mammalia</taxon>
        <taxon>Eutheria</taxon>
        <taxon>Laurasiatheria</taxon>
        <taxon>Artiodactyla</taxon>
        <taxon>Ruminantia</taxon>
        <taxon>Pecora</taxon>
        <taxon>Bovidae</taxon>
        <taxon>Bovinae</taxon>
        <taxon>Bos</taxon>
    </lineage>
</organism>
<accession>Q3T0F4</accession>
<proteinExistence type="evidence at transcript level"/>
<sequence length="165" mass="18898">MLMPKKNRIAIYELLFKEGVMVAKKDVHMPKHPELADKNVPNLHVMKAMQSLKSRGYVKEQFAWRHFYWYLTNEGIQYLRDYLHLPPEIVPATLRRSRPETGRPRPKGLEGERPARLTRGEADRDTYRRSAVPPGADKKAEAGAGSATEFQFRGGFGRGRGQPPQ</sequence>
<protein>
    <recommendedName>
        <fullName evidence="4">Small ribosomal subunit protein eS10</fullName>
    </recommendedName>
    <alternativeName>
        <fullName>40S ribosomal protein S10</fullName>
    </alternativeName>
</protein>
<gene>
    <name type="primary">RPS10</name>
</gene>
<feature type="chain" id="PRO_0000240292" description="Small ribosomal subunit protein eS10">
    <location>
        <begin position="1"/>
        <end position="165"/>
    </location>
</feature>
<feature type="region of interest" description="Disordered" evidence="3">
    <location>
        <begin position="92"/>
        <end position="165"/>
    </location>
</feature>
<feature type="compositionally biased region" description="Basic and acidic residues" evidence="3">
    <location>
        <begin position="97"/>
        <end position="128"/>
    </location>
</feature>
<feature type="compositionally biased region" description="Gly residues" evidence="3">
    <location>
        <begin position="154"/>
        <end position="165"/>
    </location>
</feature>
<feature type="modified residue" description="Phosphotyrosine" evidence="2">
    <location>
        <position position="12"/>
    </location>
</feature>
<feature type="modified residue" description="Phosphoserine" evidence="2">
    <location>
        <position position="146"/>
    </location>
</feature>
<feature type="modified residue" description="Omega-N-methylarginine" evidence="2">
    <location>
        <position position="153"/>
    </location>
</feature>
<feature type="modified residue" description="Symmetric dimethylarginine" evidence="1">
    <location>
        <position position="158"/>
    </location>
</feature>
<feature type="modified residue" description="Symmetric dimethylarginine" evidence="1">
    <location>
        <position position="160"/>
    </location>
</feature>
<feature type="cross-link" description="Glycyl lysine isopeptide (Lys-Gly) (interchain with G-Cter in ubiquitin)" evidence="1">
    <location>
        <position position="138"/>
    </location>
</feature>
<feature type="cross-link" description="Glycyl lysine isopeptide (Lys-Gly) (interchain with G-Cter in ubiquitin)" evidence="1">
    <location>
        <position position="139"/>
    </location>
</feature>